<sequence>MDYSHSDSPSTAPAGKTPVDQLRPLLIVGPTGAGKSDLSLEVARRLDQPVEIINGDSMQMYRGMDIGTAKLSRAERAEFPHHLFDCLDVDDTASVAAYRDLAGETVEQIQARGARPIIVGGSMMYLQALVDDWQFPPTDAAVRAKWMAEQDRIGVEALHEVLRSKDPDAADIIEEKDPRRIVRALEVIELTGKPFAASQPPKNVPTRWGTRIFGLKAPGNWLNPRLEARVDRMFAAGLVAEVEGLATAGLSRESTAGKAIGYAQVLSALAGECSMEQAREDTVVGTRRYARRQRSWFRRDPRIHWLDATVADPGLLAGQVIDELRETTQG</sequence>
<reference key="1">
    <citation type="journal article" date="2008" name="J. Biotechnol.">
        <title>The lifestyle of Corynebacterium urealyticum derived from its complete genome sequence established by pyrosequencing.</title>
        <authorList>
            <person name="Tauch A."/>
            <person name="Trost E."/>
            <person name="Tilker A."/>
            <person name="Ludewig U."/>
            <person name="Schneiker S."/>
            <person name="Goesmann A."/>
            <person name="Arnold W."/>
            <person name="Bekel T."/>
            <person name="Brinkrolf K."/>
            <person name="Brune I."/>
            <person name="Goetker S."/>
            <person name="Kalinowski J."/>
            <person name="Kamp P.-B."/>
            <person name="Lobo F.P."/>
            <person name="Viehoever P."/>
            <person name="Weisshaar B."/>
            <person name="Soriano F."/>
            <person name="Droege M."/>
            <person name="Puehler A."/>
        </authorList>
    </citation>
    <scope>NUCLEOTIDE SEQUENCE [LARGE SCALE GENOMIC DNA]</scope>
    <source>
        <strain>ATCC 43042 / DSM 7109</strain>
    </source>
</reference>
<organism>
    <name type="scientific">Corynebacterium urealyticum (strain ATCC 43042 / DSM 7109)</name>
    <dbReference type="NCBI Taxonomy" id="504474"/>
    <lineage>
        <taxon>Bacteria</taxon>
        <taxon>Bacillati</taxon>
        <taxon>Actinomycetota</taxon>
        <taxon>Actinomycetes</taxon>
        <taxon>Mycobacteriales</taxon>
        <taxon>Corynebacteriaceae</taxon>
        <taxon>Corynebacterium</taxon>
    </lineage>
</organism>
<name>MIAA_CORU7</name>
<comment type="function">
    <text evidence="1">Catalyzes the transfer of a dimethylallyl group onto the adenine at position 37 in tRNAs that read codons beginning with uridine, leading to the formation of N6-(dimethylallyl)adenosine (i(6)A).</text>
</comment>
<comment type="catalytic activity">
    <reaction evidence="1">
        <text>adenosine(37) in tRNA + dimethylallyl diphosphate = N(6)-dimethylallyladenosine(37) in tRNA + diphosphate</text>
        <dbReference type="Rhea" id="RHEA:26482"/>
        <dbReference type="Rhea" id="RHEA-COMP:10162"/>
        <dbReference type="Rhea" id="RHEA-COMP:10375"/>
        <dbReference type="ChEBI" id="CHEBI:33019"/>
        <dbReference type="ChEBI" id="CHEBI:57623"/>
        <dbReference type="ChEBI" id="CHEBI:74411"/>
        <dbReference type="ChEBI" id="CHEBI:74415"/>
        <dbReference type="EC" id="2.5.1.75"/>
    </reaction>
</comment>
<comment type="cofactor">
    <cofactor evidence="1">
        <name>Mg(2+)</name>
        <dbReference type="ChEBI" id="CHEBI:18420"/>
    </cofactor>
</comment>
<comment type="subunit">
    <text evidence="1">Monomer.</text>
</comment>
<comment type="similarity">
    <text evidence="1">Belongs to the IPP transferase family.</text>
</comment>
<accession>B1VDE1</accession>
<gene>
    <name evidence="1" type="primary">miaA</name>
    <name type="ordered locus">cu0879</name>
</gene>
<dbReference type="EC" id="2.5.1.75" evidence="1"/>
<dbReference type="EMBL" id="AM942444">
    <property type="protein sequence ID" value="CAQ04839.1"/>
    <property type="molecule type" value="Genomic_DNA"/>
</dbReference>
<dbReference type="RefSeq" id="WP_012360128.1">
    <property type="nucleotide sequence ID" value="NC_010545.1"/>
</dbReference>
<dbReference type="SMR" id="B1VDE1"/>
<dbReference type="STRING" id="504474.cu0879"/>
<dbReference type="GeneID" id="60603655"/>
<dbReference type="KEGG" id="cur:cu0879"/>
<dbReference type="eggNOG" id="COG0324">
    <property type="taxonomic scope" value="Bacteria"/>
</dbReference>
<dbReference type="HOGENOM" id="CLU_032616_0_1_11"/>
<dbReference type="Proteomes" id="UP000001727">
    <property type="component" value="Chromosome"/>
</dbReference>
<dbReference type="GO" id="GO:0005524">
    <property type="term" value="F:ATP binding"/>
    <property type="evidence" value="ECO:0007669"/>
    <property type="project" value="UniProtKB-UniRule"/>
</dbReference>
<dbReference type="GO" id="GO:0052381">
    <property type="term" value="F:tRNA dimethylallyltransferase activity"/>
    <property type="evidence" value="ECO:0007669"/>
    <property type="project" value="UniProtKB-UniRule"/>
</dbReference>
<dbReference type="GO" id="GO:0006400">
    <property type="term" value="P:tRNA modification"/>
    <property type="evidence" value="ECO:0007669"/>
    <property type="project" value="TreeGrafter"/>
</dbReference>
<dbReference type="FunFam" id="1.10.20.140:FF:000001">
    <property type="entry name" value="tRNA dimethylallyltransferase"/>
    <property type="match status" value="1"/>
</dbReference>
<dbReference type="Gene3D" id="1.10.20.140">
    <property type="match status" value="1"/>
</dbReference>
<dbReference type="Gene3D" id="3.40.50.300">
    <property type="entry name" value="P-loop containing nucleotide triphosphate hydrolases"/>
    <property type="match status" value="1"/>
</dbReference>
<dbReference type="HAMAP" id="MF_00185">
    <property type="entry name" value="IPP_trans"/>
    <property type="match status" value="1"/>
</dbReference>
<dbReference type="InterPro" id="IPR039657">
    <property type="entry name" value="Dimethylallyltransferase"/>
</dbReference>
<dbReference type="InterPro" id="IPR018022">
    <property type="entry name" value="IPT"/>
</dbReference>
<dbReference type="InterPro" id="IPR027417">
    <property type="entry name" value="P-loop_NTPase"/>
</dbReference>
<dbReference type="NCBIfam" id="TIGR00174">
    <property type="entry name" value="miaA"/>
    <property type="match status" value="1"/>
</dbReference>
<dbReference type="PANTHER" id="PTHR11088">
    <property type="entry name" value="TRNA DIMETHYLALLYLTRANSFERASE"/>
    <property type="match status" value="1"/>
</dbReference>
<dbReference type="PANTHER" id="PTHR11088:SF60">
    <property type="entry name" value="TRNA DIMETHYLALLYLTRANSFERASE"/>
    <property type="match status" value="1"/>
</dbReference>
<dbReference type="Pfam" id="PF01715">
    <property type="entry name" value="IPPT"/>
    <property type="match status" value="1"/>
</dbReference>
<dbReference type="SUPFAM" id="SSF52540">
    <property type="entry name" value="P-loop containing nucleoside triphosphate hydrolases"/>
    <property type="match status" value="1"/>
</dbReference>
<evidence type="ECO:0000255" key="1">
    <source>
        <dbReference type="HAMAP-Rule" id="MF_00185"/>
    </source>
</evidence>
<evidence type="ECO:0000256" key="2">
    <source>
        <dbReference type="SAM" id="MobiDB-lite"/>
    </source>
</evidence>
<proteinExistence type="inferred from homology"/>
<keyword id="KW-0067">ATP-binding</keyword>
<keyword id="KW-0460">Magnesium</keyword>
<keyword id="KW-0547">Nucleotide-binding</keyword>
<keyword id="KW-1185">Reference proteome</keyword>
<keyword id="KW-0808">Transferase</keyword>
<keyword id="KW-0819">tRNA processing</keyword>
<feature type="chain" id="PRO_0000377128" description="tRNA dimethylallyltransferase">
    <location>
        <begin position="1"/>
        <end position="330"/>
    </location>
</feature>
<feature type="region of interest" description="Disordered" evidence="2">
    <location>
        <begin position="1"/>
        <end position="21"/>
    </location>
</feature>
<feature type="region of interest" description="Interaction with substrate tRNA" evidence="1">
    <location>
        <begin position="56"/>
        <end position="59"/>
    </location>
</feature>
<feature type="compositionally biased region" description="Polar residues" evidence="2">
    <location>
        <begin position="1"/>
        <end position="11"/>
    </location>
</feature>
<feature type="binding site" evidence="1">
    <location>
        <begin position="29"/>
        <end position="36"/>
    </location>
    <ligand>
        <name>ATP</name>
        <dbReference type="ChEBI" id="CHEBI:30616"/>
    </ligand>
</feature>
<feature type="binding site" evidence="1">
    <location>
        <begin position="31"/>
        <end position="36"/>
    </location>
    <ligand>
        <name>substrate</name>
    </ligand>
</feature>
<feature type="site" description="Interaction with substrate tRNA" evidence="1">
    <location>
        <position position="122"/>
    </location>
</feature>
<feature type="site" description="Interaction with substrate tRNA" evidence="1">
    <location>
        <position position="143"/>
    </location>
</feature>
<protein>
    <recommendedName>
        <fullName evidence="1">tRNA dimethylallyltransferase</fullName>
        <ecNumber evidence="1">2.5.1.75</ecNumber>
    </recommendedName>
    <alternativeName>
        <fullName evidence="1">Dimethylallyl diphosphate:tRNA dimethylallyltransferase</fullName>
        <shortName evidence="1">DMAPP:tRNA dimethylallyltransferase</shortName>
        <shortName evidence="1">DMATase</shortName>
    </alternativeName>
    <alternativeName>
        <fullName evidence="1">Isopentenyl-diphosphate:tRNA isopentenyltransferase</fullName>
        <shortName evidence="1">IPP transferase</shortName>
        <shortName evidence="1">IPPT</shortName>
        <shortName evidence="1">IPTase</shortName>
    </alternativeName>
</protein>